<keyword id="KW-0963">Cytoplasm</keyword>
<keyword id="KW-0396">Initiation factor</keyword>
<keyword id="KW-0648">Protein biosynthesis</keyword>
<keyword id="KW-0694">RNA-binding</keyword>
<keyword id="KW-0699">rRNA-binding</keyword>
<proteinExistence type="inferred from homology"/>
<reference key="1">
    <citation type="journal article" date="2005" name="PLoS Biol.">
        <title>The genome sequence of Rickettsia felis identifies the first putative conjugative plasmid in an obligate intracellular parasite.</title>
        <authorList>
            <person name="Ogata H."/>
            <person name="Renesto P."/>
            <person name="Audic S."/>
            <person name="Robert C."/>
            <person name="Blanc G."/>
            <person name="Fournier P.-E."/>
            <person name="Parinello H."/>
            <person name="Claverie J.-M."/>
            <person name="Raoult D."/>
        </authorList>
    </citation>
    <scope>NUCLEOTIDE SEQUENCE [LARGE SCALE GENOMIC DNA]</scope>
    <source>
        <strain>ATCC VR-1525 / URRWXCal2</strain>
    </source>
</reference>
<evidence type="ECO:0000255" key="1">
    <source>
        <dbReference type="HAMAP-Rule" id="MF_00075"/>
    </source>
</evidence>
<dbReference type="EMBL" id="CP000053">
    <property type="protein sequence ID" value="AAY62143.1"/>
    <property type="molecule type" value="Genomic_DNA"/>
</dbReference>
<dbReference type="SMR" id="Q4UJZ6"/>
<dbReference type="STRING" id="315456.RF_1292"/>
<dbReference type="KEGG" id="rfe:RF_1292"/>
<dbReference type="eggNOG" id="COG0361">
    <property type="taxonomic scope" value="Bacteria"/>
</dbReference>
<dbReference type="HOGENOM" id="CLU_151267_1_0_5"/>
<dbReference type="OrthoDB" id="9803250at2"/>
<dbReference type="Proteomes" id="UP000008548">
    <property type="component" value="Chromosome"/>
</dbReference>
<dbReference type="GO" id="GO:0005829">
    <property type="term" value="C:cytosol"/>
    <property type="evidence" value="ECO:0007669"/>
    <property type="project" value="TreeGrafter"/>
</dbReference>
<dbReference type="GO" id="GO:0043022">
    <property type="term" value="F:ribosome binding"/>
    <property type="evidence" value="ECO:0007669"/>
    <property type="project" value="UniProtKB-UniRule"/>
</dbReference>
<dbReference type="GO" id="GO:0019843">
    <property type="term" value="F:rRNA binding"/>
    <property type="evidence" value="ECO:0007669"/>
    <property type="project" value="UniProtKB-UniRule"/>
</dbReference>
<dbReference type="GO" id="GO:0003743">
    <property type="term" value="F:translation initiation factor activity"/>
    <property type="evidence" value="ECO:0007669"/>
    <property type="project" value="UniProtKB-UniRule"/>
</dbReference>
<dbReference type="CDD" id="cd04451">
    <property type="entry name" value="S1_IF1"/>
    <property type="match status" value="1"/>
</dbReference>
<dbReference type="FunFam" id="2.40.50.140:FF:000002">
    <property type="entry name" value="Translation initiation factor IF-1"/>
    <property type="match status" value="1"/>
</dbReference>
<dbReference type="Gene3D" id="2.40.50.140">
    <property type="entry name" value="Nucleic acid-binding proteins"/>
    <property type="match status" value="1"/>
</dbReference>
<dbReference type="HAMAP" id="MF_00075">
    <property type="entry name" value="IF_1"/>
    <property type="match status" value="1"/>
</dbReference>
<dbReference type="InterPro" id="IPR012340">
    <property type="entry name" value="NA-bd_OB-fold"/>
</dbReference>
<dbReference type="InterPro" id="IPR006196">
    <property type="entry name" value="RNA-binding_domain_S1_IF1"/>
</dbReference>
<dbReference type="InterPro" id="IPR004368">
    <property type="entry name" value="TIF_IF1"/>
</dbReference>
<dbReference type="NCBIfam" id="TIGR00008">
    <property type="entry name" value="infA"/>
    <property type="match status" value="1"/>
</dbReference>
<dbReference type="PANTHER" id="PTHR33370">
    <property type="entry name" value="TRANSLATION INITIATION FACTOR IF-1, CHLOROPLASTIC"/>
    <property type="match status" value="1"/>
</dbReference>
<dbReference type="PANTHER" id="PTHR33370:SF1">
    <property type="entry name" value="TRANSLATION INITIATION FACTOR IF-1, CHLOROPLASTIC"/>
    <property type="match status" value="1"/>
</dbReference>
<dbReference type="Pfam" id="PF01176">
    <property type="entry name" value="eIF-1a"/>
    <property type="match status" value="1"/>
</dbReference>
<dbReference type="SUPFAM" id="SSF50249">
    <property type="entry name" value="Nucleic acid-binding proteins"/>
    <property type="match status" value="1"/>
</dbReference>
<dbReference type="PROSITE" id="PS50832">
    <property type="entry name" value="S1_IF1_TYPE"/>
    <property type="match status" value="1"/>
</dbReference>
<sequence length="71" mass="8237">MSKDDLIQFTGTVLELLPNATFRVKLENDYVIIAHTSGRMRKNRIRILLGDKVTVEMTPYDLTKGRVIHRH</sequence>
<accession>Q4UJZ6</accession>
<gene>
    <name evidence="1" type="primary">infA</name>
    <name type="ordered locus">RF_1292</name>
</gene>
<protein>
    <recommendedName>
        <fullName evidence="1">Translation initiation factor IF-1</fullName>
    </recommendedName>
</protein>
<comment type="function">
    <text evidence="1">One of the essential components for the initiation of protein synthesis. Stabilizes the binding of IF-2 and IF-3 on the 30S subunit to which N-formylmethionyl-tRNA(fMet) subsequently binds. Helps modulate mRNA selection, yielding the 30S pre-initiation complex (PIC). Upon addition of the 50S ribosomal subunit IF-1, IF-2 and IF-3 are released leaving the mature 70S translation initiation complex.</text>
</comment>
<comment type="subunit">
    <text evidence="1">Component of the 30S ribosomal translation pre-initiation complex which assembles on the 30S ribosome in the order IF-2 and IF-3, IF-1 and N-formylmethionyl-tRNA(fMet); mRNA recruitment can occur at any time during PIC assembly.</text>
</comment>
<comment type="subcellular location">
    <subcellularLocation>
        <location evidence="1">Cytoplasm</location>
    </subcellularLocation>
</comment>
<comment type="similarity">
    <text evidence="1">Belongs to the IF-1 family.</text>
</comment>
<organism>
    <name type="scientific">Rickettsia felis (strain ATCC VR-1525 / URRWXCal2)</name>
    <name type="common">Rickettsia azadi</name>
    <dbReference type="NCBI Taxonomy" id="315456"/>
    <lineage>
        <taxon>Bacteria</taxon>
        <taxon>Pseudomonadati</taxon>
        <taxon>Pseudomonadota</taxon>
        <taxon>Alphaproteobacteria</taxon>
        <taxon>Rickettsiales</taxon>
        <taxon>Rickettsiaceae</taxon>
        <taxon>Rickettsieae</taxon>
        <taxon>Rickettsia</taxon>
        <taxon>spotted fever group</taxon>
    </lineage>
</organism>
<name>IF1_RICFE</name>
<feature type="chain" id="PRO_0000095854" description="Translation initiation factor IF-1">
    <location>
        <begin position="1"/>
        <end position="71"/>
    </location>
</feature>
<feature type="domain" description="S1-like" evidence="1">
    <location>
        <begin position="1"/>
        <end position="71"/>
    </location>
</feature>